<protein>
    <recommendedName>
        <fullName evidence="1">tRNA(Ile)-lysidine synthase</fullName>
        <ecNumber evidence="1">6.3.4.19</ecNumber>
    </recommendedName>
    <alternativeName>
        <fullName evidence="1">tRNA(Ile)-2-lysyl-cytidine synthase</fullName>
    </alternativeName>
    <alternativeName>
        <fullName evidence="1">tRNA(Ile)-lysidine synthetase</fullName>
    </alternativeName>
</protein>
<comment type="function">
    <text evidence="1">Ligates lysine onto the cytidine present at position 34 of the AUA codon-specific tRNA(Ile) that contains the anticodon CAU, in an ATP-dependent manner. Cytidine is converted to lysidine, thus changing the amino acid specificity of the tRNA from methionine to isoleucine.</text>
</comment>
<comment type="catalytic activity">
    <reaction evidence="1">
        <text>cytidine(34) in tRNA(Ile2) + L-lysine + ATP = lysidine(34) in tRNA(Ile2) + AMP + diphosphate + H(+)</text>
        <dbReference type="Rhea" id="RHEA:43744"/>
        <dbReference type="Rhea" id="RHEA-COMP:10625"/>
        <dbReference type="Rhea" id="RHEA-COMP:10670"/>
        <dbReference type="ChEBI" id="CHEBI:15378"/>
        <dbReference type="ChEBI" id="CHEBI:30616"/>
        <dbReference type="ChEBI" id="CHEBI:32551"/>
        <dbReference type="ChEBI" id="CHEBI:33019"/>
        <dbReference type="ChEBI" id="CHEBI:82748"/>
        <dbReference type="ChEBI" id="CHEBI:83665"/>
        <dbReference type="ChEBI" id="CHEBI:456215"/>
        <dbReference type="EC" id="6.3.4.19"/>
    </reaction>
</comment>
<comment type="subcellular location">
    <subcellularLocation>
        <location evidence="1">Cytoplasm</location>
    </subcellularLocation>
</comment>
<comment type="domain">
    <text>The N-terminal region contains the highly conserved SGGXDS motif, predicted to be a P-loop motif involved in ATP binding.</text>
</comment>
<comment type="similarity">
    <text evidence="1">Belongs to the tRNA(Ile)-lysidine synthase family.</text>
</comment>
<reference key="1">
    <citation type="journal article" date="2001" name="Science">
        <title>Mechanisms of evolution in Rickettsia conorii and R. prowazekii.</title>
        <authorList>
            <person name="Ogata H."/>
            <person name="Audic S."/>
            <person name="Renesto-Audiffren P."/>
            <person name="Fournier P.-E."/>
            <person name="Barbe V."/>
            <person name="Samson D."/>
            <person name="Roux V."/>
            <person name="Cossart P."/>
            <person name="Weissenbach J."/>
            <person name="Claverie J.-M."/>
            <person name="Raoult D."/>
        </authorList>
    </citation>
    <scope>NUCLEOTIDE SEQUENCE [LARGE SCALE GENOMIC DNA]</scope>
    <source>
        <strain>ATCC VR-613 / Malish 7</strain>
    </source>
</reference>
<feature type="chain" id="PRO_0000181756" description="tRNA(Ile)-lysidine synthase">
    <location>
        <begin position="1"/>
        <end position="478"/>
    </location>
</feature>
<feature type="binding site" evidence="1">
    <location>
        <begin position="27"/>
        <end position="32"/>
    </location>
    <ligand>
        <name>ATP</name>
        <dbReference type="ChEBI" id="CHEBI:30616"/>
    </ligand>
</feature>
<proteinExistence type="inferred from homology"/>
<evidence type="ECO:0000255" key="1">
    <source>
        <dbReference type="HAMAP-Rule" id="MF_01161"/>
    </source>
</evidence>
<gene>
    <name evidence="1" type="primary">tilS</name>
    <name type="ordered locus">RC0067</name>
</gene>
<accession>Q92JK0</accession>
<dbReference type="EC" id="6.3.4.19" evidence="1"/>
<dbReference type="EMBL" id="AE006914">
    <property type="protein sequence ID" value="AAL02605.1"/>
    <property type="molecule type" value="Genomic_DNA"/>
</dbReference>
<dbReference type="PIR" id="C97708">
    <property type="entry name" value="C97708"/>
</dbReference>
<dbReference type="RefSeq" id="WP_010976752.1">
    <property type="nucleotide sequence ID" value="NC_003103.1"/>
</dbReference>
<dbReference type="GeneID" id="928597"/>
<dbReference type="KEGG" id="rco:RC0067"/>
<dbReference type="PATRIC" id="fig|272944.4.peg.78"/>
<dbReference type="HOGENOM" id="CLU_018869_3_2_5"/>
<dbReference type="Proteomes" id="UP000000816">
    <property type="component" value="Chromosome"/>
</dbReference>
<dbReference type="GO" id="GO:0005737">
    <property type="term" value="C:cytoplasm"/>
    <property type="evidence" value="ECO:0007669"/>
    <property type="project" value="UniProtKB-SubCell"/>
</dbReference>
<dbReference type="GO" id="GO:0005524">
    <property type="term" value="F:ATP binding"/>
    <property type="evidence" value="ECO:0007669"/>
    <property type="project" value="UniProtKB-UniRule"/>
</dbReference>
<dbReference type="GO" id="GO:0032267">
    <property type="term" value="F:tRNA(Ile)-lysidine synthase activity"/>
    <property type="evidence" value="ECO:0007669"/>
    <property type="project" value="UniProtKB-EC"/>
</dbReference>
<dbReference type="GO" id="GO:0006400">
    <property type="term" value="P:tRNA modification"/>
    <property type="evidence" value="ECO:0007669"/>
    <property type="project" value="UniProtKB-UniRule"/>
</dbReference>
<dbReference type="CDD" id="cd01992">
    <property type="entry name" value="TilS_N"/>
    <property type="match status" value="1"/>
</dbReference>
<dbReference type="Gene3D" id="3.40.50.620">
    <property type="entry name" value="HUPs"/>
    <property type="match status" value="1"/>
</dbReference>
<dbReference type="HAMAP" id="MF_01161">
    <property type="entry name" value="tRNA_Ile_lys_synt"/>
    <property type="match status" value="1"/>
</dbReference>
<dbReference type="InterPro" id="IPR014729">
    <property type="entry name" value="Rossmann-like_a/b/a_fold"/>
</dbReference>
<dbReference type="InterPro" id="IPR005728">
    <property type="entry name" value="RPE1"/>
</dbReference>
<dbReference type="InterPro" id="IPR011063">
    <property type="entry name" value="TilS/TtcA_N"/>
</dbReference>
<dbReference type="InterPro" id="IPR012094">
    <property type="entry name" value="tRNA_Ile_lys_synt"/>
</dbReference>
<dbReference type="InterPro" id="IPR012795">
    <property type="entry name" value="tRNA_Ile_lys_synt_N"/>
</dbReference>
<dbReference type="NCBIfam" id="TIGR02432">
    <property type="entry name" value="lysidine_TilS_N"/>
    <property type="match status" value="1"/>
</dbReference>
<dbReference type="NCBIfam" id="TIGR01045">
    <property type="entry name" value="RPE1"/>
    <property type="match status" value="1"/>
</dbReference>
<dbReference type="PANTHER" id="PTHR43033">
    <property type="entry name" value="TRNA(ILE)-LYSIDINE SYNTHASE-RELATED"/>
    <property type="match status" value="1"/>
</dbReference>
<dbReference type="PANTHER" id="PTHR43033:SF1">
    <property type="entry name" value="TRNA(ILE)-LYSIDINE SYNTHASE-RELATED"/>
    <property type="match status" value="1"/>
</dbReference>
<dbReference type="Pfam" id="PF01171">
    <property type="entry name" value="ATP_bind_3"/>
    <property type="match status" value="1"/>
</dbReference>
<dbReference type="SUPFAM" id="SSF52402">
    <property type="entry name" value="Adenine nucleotide alpha hydrolases-like"/>
    <property type="match status" value="1"/>
</dbReference>
<organism>
    <name type="scientific">Rickettsia conorii (strain ATCC VR-613 / Malish 7)</name>
    <dbReference type="NCBI Taxonomy" id="272944"/>
    <lineage>
        <taxon>Bacteria</taxon>
        <taxon>Pseudomonadati</taxon>
        <taxon>Pseudomonadota</taxon>
        <taxon>Alphaproteobacteria</taxon>
        <taxon>Rickettsiales</taxon>
        <taxon>Rickettsiaceae</taxon>
        <taxon>Rickettsieae</taxon>
        <taxon>Rickettsia</taxon>
        <taxon>spotted fever group</taxon>
    </lineage>
</organism>
<keyword id="KW-0067">ATP-binding</keyword>
<keyword id="KW-0963">Cytoplasm</keyword>
<keyword id="KW-0436">Ligase</keyword>
<keyword id="KW-0547">Nucleotide-binding</keyword>
<keyword id="KW-0819">tRNA processing</keyword>
<name>TILS_RICCN</name>
<sequence length="478" mass="55546">MLYEKFEYNINNLIGNFGLSKISIAVSGGSDSVALLYLANIWAEKNNIELFVISVDHNLREQSKQETHYIQNISNSLNRKHYSLSFDHQNNFSNLQERAREGRYDLMTNLCLELDILVLLTAHHEDDYVENFCLRLERNSGIFGLSSSNINWYNNIQIIRPLYNIPKSELVEYLVRHNIKWFEDESNSSDKYRRNVIRQKLAKGADYIRHFSKPVYREEFKGDTERSTAAYTLVREDASTGTASKLSLEAKCGKMSKAAIISQQLKTNKLIENEFKPELISAIAEAVKIFEYGFAFLDLVKFDKFSNEVKVQIINFLLIIISGQSRAARFYSVEPILKLITQDVNFKNTLHGCIIKRIQNELLIYREFGKKLPESKILLDKSVIWDNRFCITKNQETPNCFVTHLSLKDYKIIKKQLDLEPLKNLSCKNHNAVLLTLPIIKILEKVIAIPHISYYDNDMWNFEVSFSPNFVSRFTHFC</sequence>